<name>NTPPA_ANAD2</name>
<keyword id="KW-0963">Cytoplasm</keyword>
<keyword id="KW-0378">Hydrolase</keyword>
<keyword id="KW-0546">Nucleotide metabolism</keyword>
<comment type="function">
    <text evidence="1">Nucleoside triphosphate pyrophosphatase that hydrolyzes dTTP and UTP. May have a dual role in cell division arrest and in preventing the incorporation of modified nucleotides into cellular nucleic acids.</text>
</comment>
<comment type="catalytic activity">
    <reaction evidence="1">
        <text>dTTP + H2O = dTMP + diphosphate + H(+)</text>
        <dbReference type="Rhea" id="RHEA:28534"/>
        <dbReference type="ChEBI" id="CHEBI:15377"/>
        <dbReference type="ChEBI" id="CHEBI:15378"/>
        <dbReference type="ChEBI" id="CHEBI:33019"/>
        <dbReference type="ChEBI" id="CHEBI:37568"/>
        <dbReference type="ChEBI" id="CHEBI:63528"/>
        <dbReference type="EC" id="3.6.1.9"/>
    </reaction>
</comment>
<comment type="catalytic activity">
    <reaction evidence="1">
        <text>UTP + H2O = UMP + diphosphate + H(+)</text>
        <dbReference type="Rhea" id="RHEA:29395"/>
        <dbReference type="ChEBI" id="CHEBI:15377"/>
        <dbReference type="ChEBI" id="CHEBI:15378"/>
        <dbReference type="ChEBI" id="CHEBI:33019"/>
        <dbReference type="ChEBI" id="CHEBI:46398"/>
        <dbReference type="ChEBI" id="CHEBI:57865"/>
        <dbReference type="EC" id="3.6.1.9"/>
    </reaction>
</comment>
<comment type="cofactor">
    <cofactor evidence="1">
        <name>a divalent metal cation</name>
        <dbReference type="ChEBI" id="CHEBI:60240"/>
    </cofactor>
</comment>
<comment type="subcellular location">
    <subcellularLocation>
        <location evidence="1">Cytoplasm</location>
    </subcellularLocation>
</comment>
<comment type="similarity">
    <text evidence="1">Belongs to the Maf family. YhdE subfamily.</text>
</comment>
<feature type="chain" id="PRO_1000146276" description="dTTP/UTP pyrophosphatase">
    <location>
        <begin position="1"/>
        <end position="194"/>
    </location>
</feature>
<feature type="active site" description="Proton acceptor" evidence="1">
    <location>
        <position position="66"/>
    </location>
</feature>
<feature type="site" description="Important for substrate specificity" evidence="1">
    <location>
        <position position="13"/>
    </location>
</feature>
<feature type="site" description="Important for substrate specificity" evidence="1">
    <location>
        <position position="67"/>
    </location>
</feature>
<feature type="site" description="Important for substrate specificity" evidence="1">
    <location>
        <position position="153"/>
    </location>
</feature>
<evidence type="ECO:0000255" key="1">
    <source>
        <dbReference type="HAMAP-Rule" id="MF_00528"/>
    </source>
</evidence>
<sequence length="194" mass="20664">MAPRLVLASQSPRRRELLAQLGLALEIRPADTDERVLPGEPPRDYVLRVAREKARAVPGDLVLAADTAVVLGGEVLGKPRDADDARRMLRALSGTRHEVLTAVCVRRNASALGVELDAVVATEVAFARLGDAEIDWYVGTGEPLDKAGAYAIQGSGGAFVEEVRGSVSNVVGLPLAETAALLRRAGFPLPWERP</sequence>
<accession>B8JH92</accession>
<dbReference type="EC" id="3.6.1.9" evidence="1"/>
<dbReference type="EMBL" id="CP001359">
    <property type="protein sequence ID" value="ACL64794.1"/>
    <property type="molecule type" value="Genomic_DNA"/>
</dbReference>
<dbReference type="RefSeq" id="WP_012632742.1">
    <property type="nucleotide sequence ID" value="NC_011891.1"/>
</dbReference>
<dbReference type="SMR" id="B8JH92"/>
<dbReference type="KEGG" id="acp:A2cp1_1450"/>
<dbReference type="HOGENOM" id="CLU_040416_2_1_7"/>
<dbReference type="Proteomes" id="UP000007089">
    <property type="component" value="Chromosome"/>
</dbReference>
<dbReference type="GO" id="GO:0005737">
    <property type="term" value="C:cytoplasm"/>
    <property type="evidence" value="ECO:0007669"/>
    <property type="project" value="UniProtKB-SubCell"/>
</dbReference>
<dbReference type="GO" id="GO:0036218">
    <property type="term" value="F:dTTP diphosphatase activity"/>
    <property type="evidence" value="ECO:0007669"/>
    <property type="project" value="RHEA"/>
</dbReference>
<dbReference type="GO" id="GO:0036221">
    <property type="term" value="F:UTP diphosphatase activity"/>
    <property type="evidence" value="ECO:0007669"/>
    <property type="project" value="RHEA"/>
</dbReference>
<dbReference type="GO" id="GO:0009117">
    <property type="term" value="P:nucleotide metabolic process"/>
    <property type="evidence" value="ECO:0007669"/>
    <property type="project" value="UniProtKB-KW"/>
</dbReference>
<dbReference type="CDD" id="cd00555">
    <property type="entry name" value="Maf"/>
    <property type="match status" value="1"/>
</dbReference>
<dbReference type="Gene3D" id="3.90.950.10">
    <property type="match status" value="1"/>
</dbReference>
<dbReference type="HAMAP" id="MF_00528">
    <property type="entry name" value="Maf"/>
    <property type="match status" value="1"/>
</dbReference>
<dbReference type="InterPro" id="IPR029001">
    <property type="entry name" value="ITPase-like_fam"/>
</dbReference>
<dbReference type="InterPro" id="IPR003697">
    <property type="entry name" value="Maf-like"/>
</dbReference>
<dbReference type="NCBIfam" id="TIGR00172">
    <property type="entry name" value="maf"/>
    <property type="match status" value="1"/>
</dbReference>
<dbReference type="PANTHER" id="PTHR43213">
    <property type="entry name" value="BIFUNCTIONAL DTTP/UTP PYROPHOSPHATASE/METHYLTRANSFERASE PROTEIN-RELATED"/>
    <property type="match status" value="1"/>
</dbReference>
<dbReference type="PANTHER" id="PTHR43213:SF5">
    <property type="entry name" value="BIFUNCTIONAL DTTP_UTP PYROPHOSPHATASE_METHYLTRANSFERASE PROTEIN-RELATED"/>
    <property type="match status" value="1"/>
</dbReference>
<dbReference type="Pfam" id="PF02545">
    <property type="entry name" value="Maf"/>
    <property type="match status" value="1"/>
</dbReference>
<dbReference type="PIRSF" id="PIRSF006305">
    <property type="entry name" value="Maf"/>
    <property type="match status" value="1"/>
</dbReference>
<dbReference type="SUPFAM" id="SSF52972">
    <property type="entry name" value="ITPase-like"/>
    <property type="match status" value="1"/>
</dbReference>
<gene>
    <name type="ordered locus">A2cp1_1450</name>
</gene>
<protein>
    <recommendedName>
        <fullName evidence="1">dTTP/UTP pyrophosphatase</fullName>
        <shortName evidence="1">dTTPase/UTPase</shortName>
        <ecNumber evidence="1">3.6.1.9</ecNumber>
    </recommendedName>
    <alternativeName>
        <fullName evidence="1">Nucleoside triphosphate pyrophosphatase</fullName>
    </alternativeName>
    <alternativeName>
        <fullName evidence="1">Nucleotide pyrophosphatase</fullName>
        <shortName evidence="1">Nucleotide PPase</shortName>
    </alternativeName>
</protein>
<proteinExistence type="inferred from homology"/>
<organism>
    <name type="scientific">Anaeromyxobacter dehalogenans (strain 2CP-1 / ATCC BAA-258)</name>
    <dbReference type="NCBI Taxonomy" id="455488"/>
    <lineage>
        <taxon>Bacteria</taxon>
        <taxon>Pseudomonadati</taxon>
        <taxon>Myxococcota</taxon>
        <taxon>Myxococcia</taxon>
        <taxon>Myxococcales</taxon>
        <taxon>Cystobacterineae</taxon>
        <taxon>Anaeromyxobacteraceae</taxon>
        <taxon>Anaeromyxobacter</taxon>
    </lineage>
</organism>
<reference key="1">
    <citation type="submission" date="2009-01" db="EMBL/GenBank/DDBJ databases">
        <title>Complete sequence of Anaeromyxobacter dehalogenans 2CP-1.</title>
        <authorList>
            <person name="Lucas S."/>
            <person name="Copeland A."/>
            <person name="Lapidus A."/>
            <person name="Glavina del Rio T."/>
            <person name="Dalin E."/>
            <person name="Tice H."/>
            <person name="Bruce D."/>
            <person name="Goodwin L."/>
            <person name="Pitluck S."/>
            <person name="Saunders E."/>
            <person name="Brettin T."/>
            <person name="Detter J.C."/>
            <person name="Han C."/>
            <person name="Larimer F."/>
            <person name="Land M."/>
            <person name="Hauser L."/>
            <person name="Kyrpides N."/>
            <person name="Ovchinnikova G."/>
            <person name="Beliaev A.S."/>
            <person name="Richardson P."/>
        </authorList>
    </citation>
    <scope>NUCLEOTIDE SEQUENCE [LARGE SCALE GENOMIC DNA]</scope>
    <source>
        <strain>2CP-1 / ATCC BAA-258</strain>
    </source>
</reference>